<comment type="function">
    <text evidence="1">Component of the proteasome core, a large protease complex with broad specificity involved in protein degradation.</text>
</comment>
<comment type="catalytic activity">
    <reaction evidence="1">
        <text>Cleavage of peptide bonds with very broad specificity.</text>
        <dbReference type="EC" id="3.4.25.1"/>
    </reaction>
</comment>
<comment type="activity regulation">
    <text evidence="1">The formation of the proteasomal ATPase PAN-20S proteasome complex, via the docking of the C-termini of PAN into the intersubunit pockets in the alpha-rings, triggers opening of the gate for substrate entry. Interconversion between the open-gate and close-gate conformations leads to a dynamic regulation of the 20S proteasome proteolysis activity.</text>
</comment>
<comment type="subunit">
    <text evidence="1">The 20S proteasome core is composed of 14 alpha and 14 beta subunits that assemble into four stacked heptameric rings, resulting in a barrel-shaped structure. The two inner rings, each composed of seven catalytic beta subunits, are sandwiched by two outer rings, each composed of seven alpha subunits. The catalytic chamber with the active sites is on the inside of the barrel. Has a gated structure, the ends of the cylinder being occluded by the N-termini of the alpha-subunits. Is capped at one or both ends by the proteasome regulatory ATPase, PAN.</text>
</comment>
<comment type="subcellular location">
    <subcellularLocation>
        <location evidence="1">Cytoplasm</location>
    </subcellularLocation>
</comment>
<comment type="similarity">
    <text evidence="1">Belongs to the peptidase T1B family.</text>
</comment>
<name>PSB2_PYRAB</name>
<dbReference type="EC" id="3.4.25.1" evidence="1"/>
<dbReference type="EMBL" id="AJ248285">
    <property type="protein sequence ID" value="CAB49664.1"/>
    <property type="molecule type" value="Genomic_DNA"/>
</dbReference>
<dbReference type="EMBL" id="HE613800">
    <property type="protein sequence ID" value="CCE70146.1"/>
    <property type="molecule type" value="Genomic_DNA"/>
</dbReference>
<dbReference type="PIR" id="G75118">
    <property type="entry name" value="G75118"/>
</dbReference>
<dbReference type="RefSeq" id="WP_010867872.1">
    <property type="nucleotide sequence ID" value="NC_000868.1"/>
</dbReference>
<dbReference type="SMR" id="Q9V0N9"/>
<dbReference type="STRING" id="272844.PAB1867"/>
<dbReference type="MEROPS" id="T01.002"/>
<dbReference type="KEGG" id="pab:PAB1867"/>
<dbReference type="PATRIC" id="fig|272844.11.peg.790"/>
<dbReference type="eggNOG" id="arCOG00970">
    <property type="taxonomic scope" value="Archaea"/>
</dbReference>
<dbReference type="HOGENOM" id="CLU_035750_7_2_2"/>
<dbReference type="OrthoDB" id="6330at2157"/>
<dbReference type="PhylomeDB" id="Q9V0N9"/>
<dbReference type="Proteomes" id="UP000000810">
    <property type="component" value="Chromosome"/>
</dbReference>
<dbReference type="Proteomes" id="UP000009139">
    <property type="component" value="Chromosome"/>
</dbReference>
<dbReference type="GO" id="GO:0005737">
    <property type="term" value="C:cytoplasm"/>
    <property type="evidence" value="ECO:0007669"/>
    <property type="project" value="UniProtKB-SubCell"/>
</dbReference>
<dbReference type="GO" id="GO:0019774">
    <property type="term" value="C:proteasome core complex, beta-subunit complex"/>
    <property type="evidence" value="ECO:0000250"/>
    <property type="project" value="UniProtKB"/>
</dbReference>
<dbReference type="GO" id="GO:0004298">
    <property type="term" value="F:threonine-type endopeptidase activity"/>
    <property type="evidence" value="ECO:0007669"/>
    <property type="project" value="UniProtKB-UniRule"/>
</dbReference>
<dbReference type="GO" id="GO:0010498">
    <property type="term" value="P:proteasomal protein catabolic process"/>
    <property type="evidence" value="ECO:0007669"/>
    <property type="project" value="UniProtKB-UniRule"/>
</dbReference>
<dbReference type="CDD" id="cd03764">
    <property type="entry name" value="proteasome_beta_archeal"/>
    <property type="match status" value="1"/>
</dbReference>
<dbReference type="FunFam" id="3.60.20.10:FF:000049">
    <property type="entry name" value="Proteasome subunit beta"/>
    <property type="match status" value="1"/>
</dbReference>
<dbReference type="Gene3D" id="3.60.20.10">
    <property type="entry name" value="Glutamine Phosphoribosylpyrophosphate, subunit 1, domain 1"/>
    <property type="match status" value="1"/>
</dbReference>
<dbReference type="HAMAP" id="MF_02113_A">
    <property type="entry name" value="Proteasome_B_A"/>
    <property type="match status" value="1"/>
</dbReference>
<dbReference type="InterPro" id="IPR029055">
    <property type="entry name" value="Ntn_hydrolases_N"/>
</dbReference>
<dbReference type="InterPro" id="IPR019983">
    <property type="entry name" value="Pept_T1A_Psome_bsu_arc"/>
</dbReference>
<dbReference type="InterPro" id="IPR000243">
    <property type="entry name" value="Pept_T1A_subB"/>
</dbReference>
<dbReference type="InterPro" id="IPR016050">
    <property type="entry name" value="Proteasome_bsu_CS"/>
</dbReference>
<dbReference type="InterPro" id="IPR001353">
    <property type="entry name" value="Proteasome_sua/b"/>
</dbReference>
<dbReference type="InterPro" id="IPR023333">
    <property type="entry name" value="Proteasome_suB-type"/>
</dbReference>
<dbReference type="NCBIfam" id="TIGR03634">
    <property type="entry name" value="arc_protsome_B"/>
    <property type="match status" value="1"/>
</dbReference>
<dbReference type="PANTHER" id="PTHR32194:SF0">
    <property type="entry name" value="ATP-DEPENDENT PROTEASE SUBUNIT HSLV"/>
    <property type="match status" value="1"/>
</dbReference>
<dbReference type="PANTHER" id="PTHR32194">
    <property type="entry name" value="METALLOPROTEASE TLDD"/>
    <property type="match status" value="1"/>
</dbReference>
<dbReference type="Pfam" id="PF00227">
    <property type="entry name" value="Proteasome"/>
    <property type="match status" value="1"/>
</dbReference>
<dbReference type="PRINTS" id="PR00141">
    <property type="entry name" value="PROTEASOME"/>
</dbReference>
<dbReference type="SUPFAM" id="SSF56235">
    <property type="entry name" value="N-terminal nucleophile aminohydrolases (Ntn hydrolases)"/>
    <property type="match status" value="1"/>
</dbReference>
<dbReference type="PROSITE" id="PS00854">
    <property type="entry name" value="PROTEASOME_BETA_1"/>
    <property type="match status" value="1"/>
</dbReference>
<dbReference type="PROSITE" id="PS51476">
    <property type="entry name" value="PROTEASOME_BETA_2"/>
    <property type="match status" value="1"/>
</dbReference>
<gene>
    <name evidence="1" type="primary">psmB2</name>
    <name type="ordered locus">PYRAB07500</name>
    <name type="ORF">PAB1867</name>
</gene>
<evidence type="ECO:0000255" key="1">
    <source>
        <dbReference type="HAMAP-Rule" id="MF_02113"/>
    </source>
</evidence>
<organism>
    <name type="scientific">Pyrococcus abyssi (strain GE5 / Orsay)</name>
    <dbReference type="NCBI Taxonomy" id="272844"/>
    <lineage>
        <taxon>Archaea</taxon>
        <taxon>Methanobacteriati</taxon>
        <taxon>Methanobacteriota</taxon>
        <taxon>Thermococci</taxon>
        <taxon>Thermococcales</taxon>
        <taxon>Thermococcaceae</taxon>
        <taxon>Pyrococcus</taxon>
    </lineage>
</organism>
<keyword id="KW-0068">Autocatalytic cleavage</keyword>
<keyword id="KW-0963">Cytoplasm</keyword>
<keyword id="KW-0378">Hydrolase</keyword>
<keyword id="KW-0645">Protease</keyword>
<keyword id="KW-0647">Proteasome</keyword>
<keyword id="KW-0888">Threonine protease</keyword>
<keyword id="KW-0865">Zymogen</keyword>
<accession>Q9V0N9</accession>
<accession>G8ZGV1</accession>
<feature type="propeptide" id="PRO_0000026667" description="Removed in mature form; by autocatalysis" evidence="1">
    <location>
        <begin position="1"/>
        <end position="10"/>
    </location>
</feature>
<feature type="chain" id="PRO_0000026668" description="Proteasome subunit beta 2">
    <location>
        <begin position="11"/>
        <end position="207"/>
    </location>
</feature>
<feature type="active site" description="Nucleophile" evidence="1">
    <location>
        <position position="11"/>
    </location>
</feature>
<sequence>MLQLTEKFKGTTTVGIVCSDGVVLAADRRASLGNIVYAKNVTKIHKIDEHLAIAGAGDVGDILNLVRLLRAEAKLYYAQSGKRMSVKALATLLANMLNGARMLPYLAWFLVGGFDEKPRLYSVDMMGGITEDKYVAAGSGMEFAYSVLDSEYREDLKVREGIKIAVEAINSAIKRDVFSGDGIMVVTITEEGYRELSNSRLKAILRQ</sequence>
<proteinExistence type="inferred from homology"/>
<protein>
    <recommendedName>
        <fullName evidence="1">Proteasome subunit beta 2</fullName>
        <ecNumber evidence="1">3.4.25.1</ecNumber>
    </recommendedName>
    <alternativeName>
        <fullName evidence="1">20S proteasome beta subunit 2</fullName>
    </alternativeName>
    <alternativeName>
        <fullName evidence="1">Proteasome core protein PsmB 2</fullName>
    </alternativeName>
</protein>
<reference key="1">
    <citation type="journal article" date="2003" name="Mol. Microbiol.">
        <title>An integrated analysis of the genome of the hyperthermophilic archaeon Pyrococcus abyssi.</title>
        <authorList>
            <person name="Cohen G.N."/>
            <person name="Barbe V."/>
            <person name="Flament D."/>
            <person name="Galperin M."/>
            <person name="Heilig R."/>
            <person name="Lecompte O."/>
            <person name="Poch O."/>
            <person name="Prieur D."/>
            <person name="Querellou J."/>
            <person name="Ripp R."/>
            <person name="Thierry J.-C."/>
            <person name="Van der Oost J."/>
            <person name="Weissenbach J."/>
            <person name="Zivanovic Y."/>
            <person name="Forterre P."/>
        </authorList>
    </citation>
    <scope>NUCLEOTIDE SEQUENCE [LARGE SCALE GENOMIC DNA]</scope>
    <source>
        <strain>GE5 / Orsay</strain>
    </source>
</reference>
<reference key="2">
    <citation type="journal article" date="2012" name="Curr. Microbiol.">
        <title>Re-annotation of two hyperthermophilic archaea Pyrococcus abyssi GE5 and Pyrococcus furiosus DSM 3638.</title>
        <authorList>
            <person name="Gao J."/>
            <person name="Wang J."/>
        </authorList>
    </citation>
    <scope>GENOME REANNOTATION</scope>
    <source>
        <strain>GE5 / Orsay</strain>
    </source>
</reference>